<comment type="function">
    <text evidence="1">May function in recognizing stalled ribosomes, interact with stem-loop structures in stalled mRNA molecules, and effect endonucleolytic cleavage of the mRNA. May play a role in the release non-functional ribosomes and degradation of damaged mRNAs. Has endoribonuclease activity.</text>
</comment>
<comment type="cofactor">
    <cofactor evidence="1">
        <name>a divalent metal cation</name>
        <dbReference type="ChEBI" id="CHEBI:60240"/>
    </cofactor>
</comment>
<comment type="subunit">
    <text evidence="1">Monomer.</text>
</comment>
<comment type="subcellular location">
    <subcellularLocation>
        <location evidence="1">Cytoplasm</location>
    </subcellularLocation>
</comment>
<comment type="domain">
    <text evidence="1">The N-terminal domain has the RNA-binding Sm fold. It harbors the endoribonuclease activity.</text>
</comment>
<comment type="similarity">
    <text evidence="1">Belongs to the eukaryotic release factor 1 family. Pelota subfamily.</text>
</comment>
<gene>
    <name evidence="1" type="primary">pelA</name>
    <name type="ordered locus">PH1479</name>
</gene>
<feature type="chain" id="PRO_0000361819" description="Protein pelota homolog">
    <location>
        <begin position="1"/>
        <end position="356"/>
    </location>
</feature>
<evidence type="ECO:0000255" key="1">
    <source>
        <dbReference type="HAMAP-Rule" id="MF_01853"/>
    </source>
</evidence>
<name>PELO_PYRHO</name>
<organism>
    <name type="scientific">Pyrococcus horikoshii (strain ATCC 700860 / DSM 12428 / JCM 9974 / NBRC 100139 / OT-3)</name>
    <dbReference type="NCBI Taxonomy" id="70601"/>
    <lineage>
        <taxon>Archaea</taxon>
        <taxon>Methanobacteriati</taxon>
        <taxon>Methanobacteriota</taxon>
        <taxon>Thermococci</taxon>
        <taxon>Thermococcales</taxon>
        <taxon>Thermococcaceae</taxon>
        <taxon>Pyrococcus</taxon>
    </lineage>
</organism>
<protein>
    <recommendedName>
        <fullName evidence="1">Protein pelota homolog</fullName>
        <ecNumber evidence="1">3.1.-.-</ecNumber>
    </recommendedName>
</protein>
<accession>O59148</accession>
<sequence>MEILEEKPKEGKVKIKVETLDDLWHLYHIITPGDVVYAKTLRKQSQRSDSLRPEKVEVIPVFLGVKVEKINFHKFANQLRVTGPIIYASREDVPLGKYHTIAVEPGTIITLQKERWKPYYIERLKEAVEASKRAKVMIVTIEDGEAEMAIVREYGLDFIATIRHNLGGKRYNIKREDEERKFFHDVAKTMKDVMSRENIQRAIVAGPGFYKEDFYKFLKENYPDLASKIVLDDTSMGGRVGIYEVIKRGTVDKVYSESRIANEIKLVEKVIERIAKDEPVAYGMKEVEEAVNYGAVEILLVLDELLKGDNREKVEELMELARSLRSKVVVVSSEHEGGEKLKALGGIAGILRFKIK</sequence>
<dbReference type="EC" id="3.1.-.-" evidence="1"/>
<dbReference type="EMBL" id="BA000001">
    <property type="protein sequence ID" value="BAA30586.1"/>
    <property type="molecule type" value="Genomic_DNA"/>
</dbReference>
<dbReference type="PIR" id="B71023">
    <property type="entry name" value="B71023"/>
</dbReference>
<dbReference type="RefSeq" id="WP_010885559.1">
    <property type="nucleotide sequence ID" value="NC_000961.1"/>
</dbReference>
<dbReference type="SMR" id="O59148"/>
<dbReference type="IntAct" id="O59148">
    <property type="interactions" value="2"/>
</dbReference>
<dbReference type="MINT" id="O59148"/>
<dbReference type="STRING" id="70601.gene:9378457"/>
<dbReference type="EnsemblBacteria" id="BAA30586">
    <property type="protein sequence ID" value="BAA30586"/>
    <property type="gene ID" value="BAA30586"/>
</dbReference>
<dbReference type="GeneID" id="1443797"/>
<dbReference type="KEGG" id="pho:PH1479"/>
<dbReference type="eggNOG" id="arCOG01741">
    <property type="taxonomic scope" value="Archaea"/>
</dbReference>
<dbReference type="OrthoDB" id="31300at2157"/>
<dbReference type="Proteomes" id="UP000000752">
    <property type="component" value="Chromosome"/>
</dbReference>
<dbReference type="GO" id="GO:0005737">
    <property type="term" value="C:cytoplasm"/>
    <property type="evidence" value="ECO:0007669"/>
    <property type="project" value="UniProtKB-SubCell"/>
</dbReference>
<dbReference type="GO" id="GO:0004519">
    <property type="term" value="F:endonuclease activity"/>
    <property type="evidence" value="ECO:0007669"/>
    <property type="project" value="UniProtKB-UniRule"/>
</dbReference>
<dbReference type="GO" id="GO:0046872">
    <property type="term" value="F:metal ion binding"/>
    <property type="evidence" value="ECO:0007669"/>
    <property type="project" value="UniProtKB-UniRule"/>
</dbReference>
<dbReference type="GO" id="GO:0070651">
    <property type="term" value="P:nonfunctional rRNA decay"/>
    <property type="evidence" value="ECO:0007669"/>
    <property type="project" value="TreeGrafter"/>
</dbReference>
<dbReference type="GO" id="GO:0070966">
    <property type="term" value="P:nuclear-transcribed mRNA catabolic process, no-go decay"/>
    <property type="evidence" value="ECO:0007669"/>
    <property type="project" value="InterPro"/>
</dbReference>
<dbReference type="GO" id="GO:0070481">
    <property type="term" value="P:nuclear-transcribed mRNA catabolic process, non-stop decay"/>
    <property type="evidence" value="ECO:0007669"/>
    <property type="project" value="InterPro"/>
</dbReference>
<dbReference type="GO" id="GO:0032790">
    <property type="term" value="P:ribosome disassembly"/>
    <property type="evidence" value="ECO:0007669"/>
    <property type="project" value="TreeGrafter"/>
</dbReference>
<dbReference type="GO" id="GO:0071025">
    <property type="term" value="P:RNA surveillance"/>
    <property type="evidence" value="ECO:0007669"/>
    <property type="project" value="InterPro"/>
</dbReference>
<dbReference type="FunFam" id="2.30.30.870:FF:000002">
    <property type="entry name" value="Protein pelota homolog"/>
    <property type="match status" value="1"/>
</dbReference>
<dbReference type="FunFam" id="3.30.420.60:FF:000005">
    <property type="entry name" value="Protein pelota homolog"/>
    <property type="match status" value="1"/>
</dbReference>
<dbReference type="Gene3D" id="3.30.1330.30">
    <property type="match status" value="1"/>
</dbReference>
<dbReference type="Gene3D" id="3.30.420.60">
    <property type="entry name" value="eRF1 domain 2"/>
    <property type="match status" value="1"/>
</dbReference>
<dbReference type="Gene3D" id="2.30.30.870">
    <property type="entry name" value="Pelota, domain A"/>
    <property type="match status" value="1"/>
</dbReference>
<dbReference type="HAMAP" id="MF_01853">
    <property type="entry name" value="PelO"/>
    <property type="match status" value="1"/>
</dbReference>
<dbReference type="InterPro" id="IPR042226">
    <property type="entry name" value="eFR1_2_sf"/>
</dbReference>
<dbReference type="InterPro" id="IPR005140">
    <property type="entry name" value="eRF1_1_Pelota"/>
</dbReference>
<dbReference type="InterPro" id="IPR005141">
    <property type="entry name" value="eRF1_2"/>
</dbReference>
<dbReference type="InterPro" id="IPR005142">
    <property type="entry name" value="eRF1_3"/>
</dbReference>
<dbReference type="InterPro" id="IPR038069">
    <property type="entry name" value="Pelota/DOM34_N"/>
</dbReference>
<dbReference type="InterPro" id="IPR023521">
    <property type="entry name" value="Pelota_arc"/>
</dbReference>
<dbReference type="InterPro" id="IPR029064">
    <property type="entry name" value="Ribosomal_eL30-like_sf"/>
</dbReference>
<dbReference type="InterPro" id="IPR004405">
    <property type="entry name" value="Transl-rel_pelota"/>
</dbReference>
<dbReference type="NCBIfam" id="TIGR00111">
    <property type="entry name" value="pelota"/>
    <property type="match status" value="1"/>
</dbReference>
<dbReference type="PANTHER" id="PTHR10853">
    <property type="entry name" value="PELOTA"/>
    <property type="match status" value="1"/>
</dbReference>
<dbReference type="PANTHER" id="PTHR10853:SF0">
    <property type="entry name" value="PROTEIN PELOTA HOMOLOG"/>
    <property type="match status" value="1"/>
</dbReference>
<dbReference type="Pfam" id="PF03463">
    <property type="entry name" value="eRF1_1"/>
    <property type="match status" value="1"/>
</dbReference>
<dbReference type="Pfam" id="PF03464">
    <property type="entry name" value="eRF1_2"/>
    <property type="match status" value="1"/>
</dbReference>
<dbReference type="Pfam" id="PF03465">
    <property type="entry name" value="eRF1_3"/>
    <property type="match status" value="1"/>
</dbReference>
<dbReference type="SMART" id="SM01194">
    <property type="entry name" value="eRF1_1"/>
    <property type="match status" value="1"/>
</dbReference>
<dbReference type="SUPFAM" id="SSF159065">
    <property type="entry name" value="Dom34/Pelota N-terminal domain-like"/>
    <property type="match status" value="1"/>
</dbReference>
<dbReference type="SUPFAM" id="SSF55315">
    <property type="entry name" value="L30e-like"/>
    <property type="match status" value="1"/>
</dbReference>
<dbReference type="SUPFAM" id="SSF53137">
    <property type="entry name" value="Translational machinery components"/>
    <property type="match status" value="1"/>
</dbReference>
<reference key="1">
    <citation type="journal article" date="1998" name="DNA Res.">
        <title>Complete sequence and gene organization of the genome of a hyper-thermophilic archaebacterium, Pyrococcus horikoshii OT3.</title>
        <authorList>
            <person name="Kawarabayasi Y."/>
            <person name="Sawada M."/>
            <person name="Horikawa H."/>
            <person name="Haikawa Y."/>
            <person name="Hino Y."/>
            <person name="Yamamoto S."/>
            <person name="Sekine M."/>
            <person name="Baba S."/>
            <person name="Kosugi H."/>
            <person name="Hosoyama A."/>
            <person name="Nagai Y."/>
            <person name="Sakai M."/>
            <person name="Ogura K."/>
            <person name="Otsuka R."/>
            <person name="Nakazawa H."/>
            <person name="Takamiya M."/>
            <person name="Ohfuku Y."/>
            <person name="Funahashi T."/>
            <person name="Tanaka T."/>
            <person name="Kudoh Y."/>
            <person name="Yamazaki J."/>
            <person name="Kushida N."/>
            <person name="Oguchi A."/>
            <person name="Aoki K."/>
            <person name="Yoshizawa T."/>
            <person name="Nakamura Y."/>
            <person name="Robb F.T."/>
            <person name="Horikoshi K."/>
            <person name="Masuchi Y."/>
            <person name="Shizuya H."/>
            <person name="Kikuchi H."/>
        </authorList>
    </citation>
    <scope>NUCLEOTIDE SEQUENCE [LARGE SCALE GENOMIC DNA]</scope>
    <source>
        <strain>ATCC 700860 / DSM 12428 / JCM 9974 / NBRC 100139 / OT-3</strain>
    </source>
</reference>
<keyword id="KW-0963">Cytoplasm</keyword>
<keyword id="KW-0255">Endonuclease</keyword>
<keyword id="KW-0378">Hydrolase</keyword>
<keyword id="KW-0479">Metal-binding</keyword>
<keyword id="KW-0540">Nuclease</keyword>
<proteinExistence type="inferred from homology"/>